<reference key="1">
    <citation type="journal article" date="1997" name="Nature">
        <title>The complete genome sequence of the hyperthermophilic, sulphate-reducing archaeon Archaeoglobus fulgidus.</title>
        <authorList>
            <person name="Klenk H.-P."/>
            <person name="Clayton R.A."/>
            <person name="Tomb J.-F."/>
            <person name="White O."/>
            <person name="Nelson K.E."/>
            <person name="Ketchum K.A."/>
            <person name="Dodson R.J."/>
            <person name="Gwinn M.L."/>
            <person name="Hickey E.K."/>
            <person name="Peterson J.D."/>
            <person name="Richardson D.L."/>
            <person name="Kerlavage A.R."/>
            <person name="Graham D.E."/>
            <person name="Kyrpides N.C."/>
            <person name="Fleischmann R.D."/>
            <person name="Quackenbush J."/>
            <person name="Lee N.H."/>
            <person name="Sutton G.G."/>
            <person name="Gill S.R."/>
            <person name="Kirkness E.F."/>
            <person name="Dougherty B.A."/>
            <person name="McKenney K."/>
            <person name="Adams M.D."/>
            <person name="Loftus B.J."/>
            <person name="Peterson S.N."/>
            <person name="Reich C.I."/>
            <person name="McNeil L.K."/>
            <person name="Badger J.H."/>
            <person name="Glodek A."/>
            <person name="Zhou L."/>
            <person name="Overbeek R."/>
            <person name="Gocayne J.D."/>
            <person name="Weidman J.F."/>
            <person name="McDonald L.A."/>
            <person name="Utterback T.R."/>
            <person name="Cotton M.D."/>
            <person name="Spriggs T."/>
            <person name="Artiach P."/>
            <person name="Kaine B.P."/>
            <person name="Sykes S.M."/>
            <person name="Sadow P.W."/>
            <person name="D'Andrea K.P."/>
            <person name="Bowman C."/>
            <person name="Fujii C."/>
            <person name="Garland S.A."/>
            <person name="Mason T.M."/>
            <person name="Olsen G.J."/>
            <person name="Fraser C.M."/>
            <person name="Smith H.O."/>
            <person name="Woese C.R."/>
            <person name="Venter J.C."/>
        </authorList>
    </citation>
    <scope>NUCLEOTIDE SEQUENCE [LARGE SCALE GENOMIC DNA]</scope>
    <source>
        <strain>ATCC 49558 / DSM 4304 / JCM 9628 / NBRC 100126 / VC-16</strain>
    </source>
</reference>
<proteinExistence type="inferred from homology"/>
<comment type="function">
    <text evidence="1">Converts cobyric acid to cobinamide by the addition of aminopropanol on the F carboxylic group.</text>
</comment>
<comment type="pathway">
    <text>Cofactor biosynthesis; adenosylcobalamin biosynthesis.</text>
</comment>
<comment type="subcellular location">
    <subcellularLocation>
        <location evidence="3">Cell membrane</location>
        <topology evidence="3">Multi-pass membrane protein</topology>
    </subcellularLocation>
</comment>
<comment type="similarity">
    <text evidence="3">Belongs to the CobD/CbiB family.</text>
</comment>
<accession>O28933</accession>
<gene>
    <name type="primary">cobD</name>
    <name type="ordered locus">AF_1336</name>
</gene>
<evidence type="ECO:0000250" key="1"/>
<evidence type="ECO:0000255" key="2"/>
<evidence type="ECO:0000305" key="3"/>
<organism>
    <name type="scientific">Archaeoglobus fulgidus (strain ATCC 49558 / DSM 4304 / JCM 9628 / NBRC 100126 / VC-16)</name>
    <dbReference type="NCBI Taxonomy" id="224325"/>
    <lineage>
        <taxon>Archaea</taxon>
        <taxon>Methanobacteriati</taxon>
        <taxon>Methanobacteriota</taxon>
        <taxon>Archaeoglobi</taxon>
        <taxon>Archaeoglobales</taxon>
        <taxon>Archaeoglobaceae</taxon>
        <taxon>Archaeoglobus</taxon>
    </lineage>
</organism>
<protein>
    <recommendedName>
        <fullName>Probable cobalamin biosynthesis protein CobD</fullName>
    </recommendedName>
</protein>
<dbReference type="EMBL" id="AE000782">
    <property type="protein sequence ID" value="AAB89908.1"/>
    <property type="molecule type" value="Genomic_DNA"/>
</dbReference>
<dbReference type="PIR" id="G69416">
    <property type="entry name" value="G69416"/>
</dbReference>
<dbReference type="STRING" id="224325.AF_1336"/>
<dbReference type="PaxDb" id="224325-AF_1336"/>
<dbReference type="EnsemblBacteria" id="AAB89908">
    <property type="protein sequence ID" value="AAB89908"/>
    <property type="gene ID" value="AF_1336"/>
</dbReference>
<dbReference type="KEGG" id="afu:AF_1336"/>
<dbReference type="eggNOG" id="arCOG04274">
    <property type="taxonomic scope" value="Archaea"/>
</dbReference>
<dbReference type="HOGENOM" id="CLU_054212_0_2_2"/>
<dbReference type="OrthoDB" id="46105at2157"/>
<dbReference type="PhylomeDB" id="O28933"/>
<dbReference type="UniPathway" id="UPA00148"/>
<dbReference type="Proteomes" id="UP000002199">
    <property type="component" value="Chromosome"/>
</dbReference>
<dbReference type="GO" id="GO:0005886">
    <property type="term" value="C:plasma membrane"/>
    <property type="evidence" value="ECO:0007669"/>
    <property type="project" value="UniProtKB-SubCell"/>
</dbReference>
<dbReference type="GO" id="GO:0015420">
    <property type="term" value="F:ABC-type vitamin B12 transporter activity"/>
    <property type="evidence" value="ECO:0007669"/>
    <property type="project" value="UniProtKB-UniRule"/>
</dbReference>
<dbReference type="GO" id="GO:0048472">
    <property type="term" value="F:threonine-phosphate decarboxylase activity"/>
    <property type="evidence" value="ECO:0007669"/>
    <property type="project" value="InterPro"/>
</dbReference>
<dbReference type="GO" id="GO:0009236">
    <property type="term" value="P:cobalamin biosynthetic process"/>
    <property type="evidence" value="ECO:0007669"/>
    <property type="project" value="UniProtKB-UniRule"/>
</dbReference>
<dbReference type="HAMAP" id="MF_00024">
    <property type="entry name" value="CobD_CbiB"/>
    <property type="match status" value="1"/>
</dbReference>
<dbReference type="InterPro" id="IPR004485">
    <property type="entry name" value="Cobalamin_biosynth_CobD/CbiB"/>
</dbReference>
<dbReference type="NCBIfam" id="TIGR00380">
    <property type="entry name" value="cobal_cbiB"/>
    <property type="match status" value="1"/>
</dbReference>
<dbReference type="NCBIfam" id="NF002281">
    <property type="entry name" value="PRK01209.2-5"/>
    <property type="match status" value="1"/>
</dbReference>
<dbReference type="PANTHER" id="PTHR34308">
    <property type="entry name" value="COBALAMIN BIOSYNTHESIS PROTEIN CBIB"/>
    <property type="match status" value="1"/>
</dbReference>
<dbReference type="PANTHER" id="PTHR34308:SF1">
    <property type="entry name" value="COBALAMIN BIOSYNTHESIS PROTEIN CBIB"/>
    <property type="match status" value="1"/>
</dbReference>
<dbReference type="Pfam" id="PF03186">
    <property type="entry name" value="CobD_Cbib"/>
    <property type="match status" value="1"/>
</dbReference>
<keyword id="KW-1003">Cell membrane</keyword>
<keyword id="KW-0169">Cobalamin biosynthesis</keyword>
<keyword id="KW-0472">Membrane</keyword>
<keyword id="KW-1185">Reference proteome</keyword>
<keyword id="KW-0812">Transmembrane</keyword>
<keyword id="KW-1133">Transmembrane helix</keyword>
<name>COBD_ARCFU</name>
<sequence length="290" mass="32159">MGIEVVVLLTTLMLDAAVGEPPALLHPVVWYGKLISLLERAKFRKMLVEIFYGAFCCLIVITFALILSLLPFPYPLNFLWAVYLLFSSISVKSMVNHARVCVESGVDRKAVQMIVSRNTEELSEEQLCSAVIESVAENYVDGVVAPLFYFSIFGVAGAVVYRAVNTCDAMVGYRKGRYEAFGKFAARLDDILNYIPARLSLLFFELLKRGAFSYGLKRNVKLNGCAIAAMSYLLGVKLEKPGYYSLPGIEPSAADIERAIKAFVRLTVIAVIFTTIAVSIRIVLLTKLHF</sequence>
<feature type="chain" id="PRO_0000150940" description="Probable cobalamin biosynthesis protein CobD">
    <location>
        <begin position="1"/>
        <end position="290"/>
    </location>
</feature>
<feature type="transmembrane region" description="Helical" evidence="2">
    <location>
        <begin position="5"/>
        <end position="25"/>
    </location>
</feature>
<feature type="transmembrane region" description="Helical" evidence="2">
    <location>
        <begin position="50"/>
        <end position="70"/>
    </location>
</feature>
<feature type="transmembrane region" description="Helical" evidence="2">
    <location>
        <begin position="71"/>
        <end position="91"/>
    </location>
</feature>
<feature type="transmembrane region" description="Helical" evidence="2">
    <location>
        <begin position="140"/>
        <end position="160"/>
    </location>
</feature>
<feature type="transmembrane region" description="Helical" evidence="2">
    <location>
        <begin position="266"/>
        <end position="286"/>
    </location>
</feature>